<feature type="transit peptide" description="Mitochondrion" evidence="4">
    <location>
        <begin position="1"/>
        <end position="21"/>
    </location>
</feature>
<feature type="chain" id="PRO_0000337112" description="Acyl-coenzyme A synthetase ACSM6, mitochondrial">
    <location>
        <begin position="22"/>
        <end position="480"/>
    </location>
</feature>
<feature type="binding site" evidence="1">
    <location>
        <begin position="226"/>
        <end position="234"/>
    </location>
    <ligand>
        <name>ATP</name>
        <dbReference type="ChEBI" id="CHEBI:30616"/>
    </ligand>
</feature>
<feature type="binding site" evidence="1">
    <location>
        <begin position="366"/>
        <end position="371"/>
    </location>
    <ligand>
        <name>ATP</name>
        <dbReference type="ChEBI" id="CHEBI:30616"/>
    </ligand>
</feature>
<feature type="binding site" evidence="1">
    <location>
        <position position="453"/>
    </location>
    <ligand>
        <name>ATP</name>
        <dbReference type="ChEBI" id="CHEBI:30616"/>
    </ligand>
</feature>
<feature type="binding site" evidence="1">
    <location>
        <position position="468"/>
    </location>
    <ligand>
        <name>ATP</name>
        <dbReference type="ChEBI" id="CHEBI:30616"/>
    </ligand>
</feature>
<feature type="splice variant" id="VSP_033908" description="In isoform 2." evidence="6">
    <location>
        <begin position="1"/>
        <end position="155"/>
    </location>
</feature>
<feature type="splice variant" id="VSP_033909" description="In isoform 3." evidence="7">
    <original>D</original>
    <variation>DNGLQLHPCCCKRQDFILFHGVIFHVD</variation>
    <location>
        <position position="65"/>
    </location>
</feature>
<feature type="splice variant" id="VSP_033910" description="In isoform 2." evidence="6">
    <original>SYRFKSLKQC</original>
    <variation>RVYSVPLPKQ</variation>
    <location>
        <begin position="332"/>
        <end position="341"/>
    </location>
</feature>
<feature type="splice variant" id="VSP_033911" description="In isoform 2." evidence="6">
    <location>
        <begin position="342"/>
        <end position="480"/>
    </location>
</feature>
<feature type="sequence variant" id="VAR_063090" description="In dbSNP:rs591157." evidence="5">
    <original>E</original>
    <variation>G</variation>
    <location>
        <position position="19"/>
    </location>
</feature>
<feature type="sequence variant" id="VAR_063091" description="In dbSNP:rs11188225." evidence="5">
    <original>C</original>
    <variation>S</variation>
    <location>
        <position position="40"/>
    </location>
</feature>
<feature type="sequence variant" id="VAR_043606" description="In dbSNP:rs7090248.">
    <original>K</original>
    <variation>R</variation>
    <location>
        <position position="227"/>
    </location>
</feature>
<proteinExistence type="evidence at protein level"/>
<organism>
    <name type="scientific">Homo sapiens</name>
    <name type="common">Human</name>
    <dbReference type="NCBI Taxonomy" id="9606"/>
    <lineage>
        <taxon>Eukaryota</taxon>
        <taxon>Metazoa</taxon>
        <taxon>Chordata</taxon>
        <taxon>Craniata</taxon>
        <taxon>Vertebrata</taxon>
        <taxon>Euteleostomi</taxon>
        <taxon>Mammalia</taxon>
        <taxon>Eutheria</taxon>
        <taxon>Euarchontoglires</taxon>
        <taxon>Primates</taxon>
        <taxon>Haplorrhini</taxon>
        <taxon>Catarrhini</taxon>
        <taxon>Hominidae</taxon>
        <taxon>Homo</taxon>
    </lineage>
</organism>
<evidence type="ECO:0000250" key="1"/>
<evidence type="ECO:0000250" key="2">
    <source>
        <dbReference type="UniProtKB" id="Q08AH1"/>
    </source>
</evidence>
<evidence type="ECO:0000250" key="3">
    <source>
        <dbReference type="UniProtKB" id="Q9BEA2"/>
    </source>
</evidence>
<evidence type="ECO:0000255" key="4"/>
<evidence type="ECO:0000269" key="5">
    <source>
    </source>
</evidence>
<evidence type="ECO:0000303" key="6">
    <source>
    </source>
</evidence>
<evidence type="ECO:0000303" key="7">
    <source>
    </source>
</evidence>
<evidence type="ECO:0000305" key="8"/>
<accession>Q6P461</accession>
<accession>A4FU95</accession>
<accession>A4IF38</accession>
<accession>Q5VZX2</accession>
<accession>Q6ZTX1</accession>
<protein>
    <recommendedName>
        <fullName>Acyl-coenzyme A synthetase ACSM6, mitochondrial</fullName>
        <ecNumber evidence="2">6.2.1.2</ecNumber>
    </recommendedName>
    <alternativeName>
        <fullName>Acyl-CoA synthetase medium-chain family member 6</fullName>
    </alternativeName>
</protein>
<dbReference type="EC" id="6.2.1.2" evidence="2"/>
<dbReference type="EMBL" id="AK126134">
    <property type="protein sequence ID" value="BAC86458.1"/>
    <property type="molecule type" value="mRNA"/>
</dbReference>
<dbReference type="EMBL" id="AL157834">
    <property type="status" value="NOT_ANNOTATED_CDS"/>
    <property type="molecule type" value="Genomic_DNA"/>
</dbReference>
<dbReference type="EMBL" id="BC063654">
    <property type="protein sequence ID" value="AAH63654.1"/>
    <property type="molecule type" value="mRNA"/>
</dbReference>
<dbReference type="EMBL" id="BC104210">
    <property type="protein sequence ID" value="AAI04211.1"/>
    <property type="status" value="ALT_INIT"/>
    <property type="molecule type" value="mRNA"/>
</dbReference>
<dbReference type="EMBL" id="BC104211">
    <property type="protein sequence ID" value="AAI04212.1"/>
    <property type="status" value="ALT_INIT"/>
    <property type="molecule type" value="mRNA"/>
</dbReference>
<dbReference type="EMBL" id="BC112988">
    <property type="protein sequence ID" value="AAI12989.1"/>
    <property type="status" value="ALT_INIT"/>
    <property type="molecule type" value="mRNA"/>
</dbReference>
<dbReference type="CCDS" id="CCDS7440.2">
    <molecule id="Q6P461-1"/>
</dbReference>
<dbReference type="RefSeq" id="NP_997204.2">
    <molecule id="Q6P461-1"/>
    <property type="nucleotide sequence ID" value="NM_207321.3"/>
</dbReference>
<dbReference type="SMR" id="Q6P461"/>
<dbReference type="FunCoup" id="Q6P461">
    <property type="interactions" value="26"/>
</dbReference>
<dbReference type="STRING" id="9606.ENSP00000340296"/>
<dbReference type="GlyGen" id="Q6P461">
    <property type="glycosylation" value="1 site, 1 O-linked glycan (1 site)"/>
</dbReference>
<dbReference type="iPTMnet" id="Q6P461"/>
<dbReference type="PhosphoSitePlus" id="Q6P461"/>
<dbReference type="BioMuta" id="ACSM6"/>
<dbReference type="MassIVE" id="Q6P461"/>
<dbReference type="PaxDb" id="9606-ENSP00000340296"/>
<dbReference type="PeptideAtlas" id="Q6P461"/>
<dbReference type="Antibodypedia" id="48989">
    <property type="antibodies" value="61 antibodies from 16 providers"/>
</dbReference>
<dbReference type="DNASU" id="142827"/>
<dbReference type="Ensembl" id="ENST00000394005.4">
    <molecule id="Q6P461-1"/>
    <property type="protein sequence ID" value="ENSP00000377573.3"/>
    <property type="gene ID" value="ENSG00000173124.15"/>
</dbReference>
<dbReference type="GeneID" id="142827"/>
<dbReference type="KEGG" id="hsa:142827"/>
<dbReference type="MANE-Select" id="ENST00000394005.4">
    <property type="protein sequence ID" value="ENSP00000377573.3"/>
    <property type="RefSeq nucleotide sequence ID" value="NM_207321.3"/>
    <property type="RefSeq protein sequence ID" value="NP_997204.2"/>
</dbReference>
<dbReference type="UCSC" id="uc001kke.4">
    <molecule id="Q6P461-1"/>
    <property type="organism name" value="human"/>
</dbReference>
<dbReference type="AGR" id="HGNC:31665"/>
<dbReference type="CTD" id="142827"/>
<dbReference type="DisGeNET" id="142827"/>
<dbReference type="GeneCards" id="ACSM6"/>
<dbReference type="HGNC" id="HGNC:31665">
    <property type="gene designation" value="ACSM6"/>
</dbReference>
<dbReference type="HPA" id="ENSG00000173124">
    <property type="expression patterns" value="Tissue enhanced (lymphoid tissue, pancreas, skin, stomach)"/>
</dbReference>
<dbReference type="neXtProt" id="NX_Q6P461"/>
<dbReference type="OpenTargets" id="ENSG00000173124"/>
<dbReference type="PharmGKB" id="PA134905303"/>
<dbReference type="VEuPathDB" id="HostDB:ENSG00000173124"/>
<dbReference type="eggNOG" id="KOG1175">
    <property type="taxonomic scope" value="Eukaryota"/>
</dbReference>
<dbReference type="GeneTree" id="ENSGT00940000165168"/>
<dbReference type="HOGENOM" id="CLU_000022_59_10_1"/>
<dbReference type="InParanoid" id="Q6P461"/>
<dbReference type="OMA" id="FGACCYP"/>
<dbReference type="OrthoDB" id="10253869at2759"/>
<dbReference type="PAN-GO" id="Q6P461">
    <property type="GO annotations" value="5 GO annotations based on evolutionary models"/>
</dbReference>
<dbReference type="PhylomeDB" id="Q6P461"/>
<dbReference type="TreeFam" id="TF354287"/>
<dbReference type="PathwayCommons" id="Q6P461"/>
<dbReference type="Reactome" id="R-HSA-77352">
    <property type="pathway name" value="Beta oxidation of butanoyl-CoA to acetyl-CoA"/>
</dbReference>
<dbReference type="BioGRID-ORCS" id="142827">
    <property type="hits" value="7 hits in 1138 CRISPR screens"/>
</dbReference>
<dbReference type="ChiTaRS" id="ACSM6">
    <property type="organism name" value="human"/>
</dbReference>
<dbReference type="GenomeRNAi" id="142827"/>
<dbReference type="Pharos" id="Q6P461">
    <property type="development level" value="Tdark"/>
</dbReference>
<dbReference type="PRO" id="PR:Q6P461"/>
<dbReference type="Proteomes" id="UP000005640">
    <property type="component" value="Chromosome 10"/>
</dbReference>
<dbReference type="RNAct" id="Q6P461">
    <property type="molecule type" value="protein"/>
</dbReference>
<dbReference type="Bgee" id="ENSG00000173124">
    <property type="expression patterns" value="Expressed in thymus and 53 other cell types or tissues"/>
</dbReference>
<dbReference type="ExpressionAtlas" id="Q6P461">
    <property type="expression patterns" value="baseline and differential"/>
</dbReference>
<dbReference type="GO" id="GO:0005759">
    <property type="term" value="C:mitochondrial matrix"/>
    <property type="evidence" value="ECO:0000318"/>
    <property type="project" value="GO_Central"/>
</dbReference>
<dbReference type="GO" id="GO:0005739">
    <property type="term" value="C:mitochondrion"/>
    <property type="evidence" value="ECO:0006056"/>
    <property type="project" value="FlyBase"/>
</dbReference>
<dbReference type="GO" id="GO:0005524">
    <property type="term" value="F:ATP binding"/>
    <property type="evidence" value="ECO:0007669"/>
    <property type="project" value="UniProtKB-KW"/>
</dbReference>
<dbReference type="GO" id="GO:0015645">
    <property type="term" value="F:fatty acid ligase activity"/>
    <property type="evidence" value="ECO:0000318"/>
    <property type="project" value="GO_Central"/>
</dbReference>
<dbReference type="GO" id="GO:0004321">
    <property type="term" value="F:fatty-acyl-CoA synthase activity"/>
    <property type="evidence" value="ECO:0000318"/>
    <property type="project" value="GO_Central"/>
</dbReference>
<dbReference type="GO" id="GO:0005525">
    <property type="term" value="F:GTP binding"/>
    <property type="evidence" value="ECO:0007669"/>
    <property type="project" value="UniProtKB-KW"/>
</dbReference>
<dbReference type="GO" id="GO:0031956">
    <property type="term" value="F:medium-chain fatty acid-CoA ligase activity"/>
    <property type="evidence" value="ECO:0007669"/>
    <property type="project" value="UniProtKB-EC"/>
</dbReference>
<dbReference type="GO" id="GO:0046872">
    <property type="term" value="F:metal ion binding"/>
    <property type="evidence" value="ECO:0007669"/>
    <property type="project" value="UniProtKB-KW"/>
</dbReference>
<dbReference type="GO" id="GO:0006637">
    <property type="term" value="P:acyl-CoA metabolic process"/>
    <property type="evidence" value="ECO:0000318"/>
    <property type="project" value="GO_Central"/>
</dbReference>
<dbReference type="GO" id="GO:0006633">
    <property type="term" value="P:fatty acid biosynthetic process"/>
    <property type="evidence" value="ECO:0000318"/>
    <property type="project" value="GO_Central"/>
</dbReference>
<dbReference type="FunFam" id="3.40.50.12780:FF:000007">
    <property type="entry name" value="Acyl-coenzyme A synthetase ACSM2A, mitochondrial"/>
    <property type="match status" value="1"/>
</dbReference>
<dbReference type="Gene3D" id="3.40.50.12780">
    <property type="entry name" value="N-terminal domain of ligase-like"/>
    <property type="match status" value="1"/>
</dbReference>
<dbReference type="InterPro" id="IPR000873">
    <property type="entry name" value="AMP-dep_synth/lig_dom"/>
</dbReference>
<dbReference type="InterPro" id="IPR042099">
    <property type="entry name" value="ANL_N_sf"/>
</dbReference>
<dbReference type="InterPro" id="IPR051087">
    <property type="entry name" value="Mitochondrial_ACSM"/>
</dbReference>
<dbReference type="PANTHER" id="PTHR43605">
    <property type="entry name" value="ACYL-COENZYME A SYNTHETASE"/>
    <property type="match status" value="1"/>
</dbReference>
<dbReference type="PANTHER" id="PTHR43605:SF1">
    <property type="entry name" value="ACYL-COENZYME A SYNTHETASE ACSM6, MITOCHONDRIAL"/>
    <property type="match status" value="1"/>
</dbReference>
<dbReference type="Pfam" id="PF00501">
    <property type="entry name" value="AMP-binding"/>
    <property type="match status" value="1"/>
</dbReference>
<dbReference type="SUPFAM" id="SSF56801">
    <property type="entry name" value="Acetyl-CoA synthetase-like"/>
    <property type="match status" value="1"/>
</dbReference>
<keyword id="KW-0025">Alternative splicing</keyword>
<keyword id="KW-0067">ATP-binding</keyword>
<keyword id="KW-0276">Fatty acid metabolism</keyword>
<keyword id="KW-0342">GTP-binding</keyword>
<keyword id="KW-0436">Ligase</keyword>
<keyword id="KW-0443">Lipid metabolism</keyword>
<keyword id="KW-0460">Magnesium</keyword>
<keyword id="KW-0479">Metal-binding</keyword>
<keyword id="KW-0496">Mitochondrion</keyword>
<keyword id="KW-0547">Nucleotide-binding</keyword>
<keyword id="KW-1267">Proteomics identification</keyword>
<keyword id="KW-1185">Reference proteome</keyword>
<keyword id="KW-0809">Transit peptide</keyword>
<comment type="function">
    <text evidence="2">Catalyzes the activation of fatty acids by CoA to produce an acyl-CoA, the first step in fatty acid metabolism.</text>
</comment>
<comment type="catalytic activity">
    <reaction evidence="2">
        <text>a medium-chain fatty acid + ATP + CoA = a medium-chain fatty acyl-CoA + AMP + diphosphate</text>
        <dbReference type="Rhea" id="RHEA:48340"/>
        <dbReference type="ChEBI" id="CHEBI:30616"/>
        <dbReference type="ChEBI" id="CHEBI:33019"/>
        <dbReference type="ChEBI" id="CHEBI:57287"/>
        <dbReference type="ChEBI" id="CHEBI:59558"/>
        <dbReference type="ChEBI" id="CHEBI:90546"/>
        <dbReference type="ChEBI" id="CHEBI:456215"/>
        <dbReference type="EC" id="6.2.1.2"/>
    </reaction>
    <physiologicalReaction direction="left-to-right" evidence="2">
        <dbReference type="Rhea" id="RHEA:48341"/>
    </physiologicalReaction>
</comment>
<comment type="cofactor">
    <cofactor evidence="2">
        <name>Mg(2+)</name>
        <dbReference type="ChEBI" id="CHEBI:18420"/>
    </cofactor>
    <cofactor evidence="2">
        <name>Mn(2+)</name>
        <dbReference type="ChEBI" id="CHEBI:29035"/>
    </cofactor>
</comment>
<comment type="subunit">
    <text evidence="3">Monomer.</text>
</comment>
<comment type="subcellular location">
    <subcellularLocation>
        <location evidence="8">Mitochondrion</location>
    </subcellularLocation>
</comment>
<comment type="alternative products">
    <event type="alternative splicing"/>
    <isoform>
        <id>Q6P461-1</id>
        <name>1</name>
        <sequence type="displayed"/>
    </isoform>
    <isoform>
        <id>Q6P461-2</id>
        <name>2</name>
        <sequence type="described" ref="VSP_033908 VSP_033910 VSP_033911"/>
    </isoform>
    <isoform>
        <id>Q6P461-3</id>
        <name>3</name>
        <sequence type="described" ref="VSP_033909"/>
    </isoform>
</comment>
<comment type="similarity">
    <text evidence="8">Belongs to the ATP-dependent AMP-binding enzyme family.</text>
</comment>
<comment type="sequence caution" evidence="8">
    <conflict type="erroneous initiation">
        <sequence resource="EMBL-CDS" id="AAI04211"/>
    </conflict>
    <text>Truncated N-terminus.</text>
</comment>
<comment type="sequence caution" evidence="8">
    <conflict type="erroneous initiation">
        <sequence resource="EMBL-CDS" id="AAI04212"/>
    </conflict>
    <text>Truncated N-terminus.</text>
</comment>
<comment type="sequence caution" evidence="8">
    <conflict type="erroneous initiation">
        <sequence resource="EMBL-CDS" id="AAI12989"/>
    </conflict>
    <text>Truncated N-terminus.</text>
</comment>
<sequence>MLGRFQPFSLVRSFRLGFEACCYPNQKCATQTIRPPDSRCLVQAVSQNFNFAKDVLDQWSQLEKDGLRGPYPALWKVSAKGEEDKWSFERMTQLSKKAASILSDTCALSHGDRLMIILPPTPEAYWICLACVRLGITFVPGSPQLTAKKIRYQLRMSKAQCIVANEAMAPVVNSAVSDCPTLKTKLLVSDKSYDGWLDFKKLIQVAPPKQTYMRTKSQDPMAIFFTKGTTGAPKMVEYSQYGLGMGFSQASRRWMDLQPTDVLWSLGDAFGGSLSLSAVLGTWFQGACVFLCHMPTFCPETVLNVLSRFPITTLSANPEMYQELLQHKCFTSYRFKSLKQCVAAGGPISPGVIEDWKRITKLDIYEGYGQTETGLLCATSKTIKLKPSSLGKPLPPYIVQIVDENSNLLPPGEEGNIAIRIKLNQPASLYCPHMVSWEEYASARGHMLYLTGDRGIMDEDGYFWWSGRVDDVANALGQRL</sequence>
<name>ACSM6_HUMAN</name>
<reference key="1">
    <citation type="journal article" date="2004" name="Nat. Genet.">
        <title>Complete sequencing and characterization of 21,243 full-length human cDNAs.</title>
        <authorList>
            <person name="Ota T."/>
            <person name="Suzuki Y."/>
            <person name="Nishikawa T."/>
            <person name="Otsuki T."/>
            <person name="Sugiyama T."/>
            <person name="Irie R."/>
            <person name="Wakamatsu A."/>
            <person name="Hayashi K."/>
            <person name="Sato H."/>
            <person name="Nagai K."/>
            <person name="Kimura K."/>
            <person name="Makita H."/>
            <person name="Sekine M."/>
            <person name="Obayashi M."/>
            <person name="Nishi T."/>
            <person name="Shibahara T."/>
            <person name="Tanaka T."/>
            <person name="Ishii S."/>
            <person name="Yamamoto J."/>
            <person name="Saito K."/>
            <person name="Kawai Y."/>
            <person name="Isono Y."/>
            <person name="Nakamura Y."/>
            <person name="Nagahari K."/>
            <person name="Murakami K."/>
            <person name="Yasuda T."/>
            <person name="Iwayanagi T."/>
            <person name="Wagatsuma M."/>
            <person name="Shiratori A."/>
            <person name="Sudo H."/>
            <person name="Hosoiri T."/>
            <person name="Kaku Y."/>
            <person name="Kodaira H."/>
            <person name="Kondo H."/>
            <person name="Sugawara M."/>
            <person name="Takahashi M."/>
            <person name="Kanda K."/>
            <person name="Yokoi T."/>
            <person name="Furuya T."/>
            <person name="Kikkawa E."/>
            <person name="Omura Y."/>
            <person name="Abe K."/>
            <person name="Kamihara K."/>
            <person name="Katsuta N."/>
            <person name="Sato K."/>
            <person name="Tanikawa M."/>
            <person name="Yamazaki M."/>
            <person name="Ninomiya K."/>
            <person name="Ishibashi T."/>
            <person name="Yamashita H."/>
            <person name="Murakawa K."/>
            <person name="Fujimori K."/>
            <person name="Tanai H."/>
            <person name="Kimata M."/>
            <person name="Watanabe M."/>
            <person name="Hiraoka S."/>
            <person name="Chiba Y."/>
            <person name="Ishida S."/>
            <person name="Ono Y."/>
            <person name="Takiguchi S."/>
            <person name="Watanabe S."/>
            <person name="Yosida M."/>
            <person name="Hotuta T."/>
            <person name="Kusano J."/>
            <person name="Kanehori K."/>
            <person name="Takahashi-Fujii A."/>
            <person name="Hara H."/>
            <person name="Tanase T.-O."/>
            <person name="Nomura Y."/>
            <person name="Togiya S."/>
            <person name="Komai F."/>
            <person name="Hara R."/>
            <person name="Takeuchi K."/>
            <person name="Arita M."/>
            <person name="Imose N."/>
            <person name="Musashino K."/>
            <person name="Yuuki H."/>
            <person name="Oshima A."/>
            <person name="Sasaki N."/>
            <person name="Aotsuka S."/>
            <person name="Yoshikawa Y."/>
            <person name="Matsunawa H."/>
            <person name="Ichihara T."/>
            <person name="Shiohata N."/>
            <person name="Sano S."/>
            <person name="Moriya S."/>
            <person name="Momiyama H."/>
            <person name="Satoh N."/>
            <person name="Takami S."/>
            <person name="Terashima Y."/>
            <person name="Suzuki O."/>
            <person name="Nakagawa S."/>
            <person name="Senoh A."/>
            <person name="Mizoguchi H."/>
            <person name="Goto Y."/>
            <person name="Shimizu F."/>
            <person name="Wakebe H."/>
            <person name="Hishigaki H."/>
            <person name="Watanabe T."/>
            <person name="Sugiyama A."/>
            <person name="Takemoto M."/>
            <person name="Kawakami B."/>
            <person name="Yamazaki M."/>
            <person name="Watanabe K."/>
            <person name="Kumagai A."/>
            <person name="Itakura S."/>
            <person name="Fukuzumi Y."/>
            <person name="Fujimori Y."/>
            <person name="Komiyama M."/>
            <person name="Tashiro H."/>
            <person name="Tanigami A."/>
            <person name="Fujiwara T."/>
            <person name="Ono T."/>
            <person name="Yamada K."/>
            <person name="Fujii Y."/>
            <person name="Ozaki K."/>
            <person name="Hirao M."/>
            <person name="Ohmori Y."/>
            <person name="Kawabata A."/>
            <person name="Hikiji T."/>
            <person name="Kobatake N."/>
            <person name="Inagaki H."/>
            <person name="Ikema Y."/>
            <person name="Okamoto S."/>
            <person name="Okitani R."/>
            <person name="Kawakami T."/>
            <person name="Noguchi S."/>
            <person name="Itoh T."/>
            <person name="Shigeta K."/>
            <person name="Senba T."/>
            <person name="Matsumura K."/>
            <person name="Nakajima Y."/>
            <person name="Mizuno T."/>
            <person name="Morinaga M."/>
            <person name="Sasaki M."/>
            <person name="Togashi T."/>
            <person name="Oyama M."/>
            <person name="Hata H."/>
            <person name="Watanabe M."/>
            <person name="Komatsu T."/>
            <person name="Mizushima-Sugano J."/>
            <person name="Satoh T."/>
            <person name="Shirai Y."/>
            <person name="Takahashi Y."/>
            <person name="Nakagawa K."/>
            <person name="Okumura K."/>
            <person name="Nagase T."/>
            <person name="Nomura N."/>
            <person name="Kikuchi H."/>
            <person name="Masuho Y."/>
            <person name="Yamashita R."/>
            <person name="Nakai K."/>
            <person name="Yada T."/>
            <person name="Nakamura Y."/>
            <person name="Ohara O."/>
            <person name="Isogai T."/>
            <person name="Sugano S."/>
        </authorList>
    </citation>
    <scope>NUCLEOTIDE SEQUENCE [LARGE SCALE MRNA] (ISOFORM 2)</scope>
    <source>
        <tissue>Thymus</tissue>
    </source>
</reference>
<reference key="2">
    <citation type="journal article" date="2004" name="Nature">
        <title>The DNA sequence and comparative analysis of human chromosome 10.</title>
        <authorList>
            <person name="Deloukas P."/>
            <person name="Earthrowl M.E."/>
            <person name="Grafham D.V."/>
            <person name="Rubenfield M."/>
            <person name="French L."/>
            <person name="Steward C.A."/>
            <person name="Sims S.K."/>
            <person name="Jones M.C."/>
            <person name="Searle S."/>
            <person name="Scott C."/>
            <person name="Howe K."/>
            <person name="Hunt S.E."/>
            <person name="Andrews T.D."/>
            <person name="Gilbert J.G.R."/>
            <person name="Swarbreck D."/>
            <person name="Ashurst J.L."/>
            <person name="Taylor A."/>
            <person name="Battles J."/>
            <person name="Bird C.P."/>
            <person name="Ainscough R."/>
            <person name="Almeida J.P."/>
            <person name="Ashwell R.I.S."/>
            <person name="Ambrose K.D."/>
            <person name="Babbage A.K."/>
            <person name="Bagguley C.L."/>
            <person name="Bailey J."/>
            <person name="Banerjee R."/>
            <person name="Bates K."/>
            <person name="Beasley H."/>
            <person name="Bray-Allen S."/>
            <person name="Brown A.J."/>
            <person name="Brown J.Y."/>
            <person name="Burford D.C."/>
            <person name="Burrill W."/>
            <person name="Burton J."/>
            <person name="Cahill P."/>
            <person name="Camire D."/>
            <person name="Carter N.P."/>
            <person name="Chapman J.C."/>
            <person name="Clark S.Y."/>
            <person name="Clarke G."/>
            <person name="Clee C.M."/>
            <person name="Clegg S."/>
            <person name="Corby N."/>
            <person name="Coulson A."/>
            <person name="Dhami P."/>
            <person name="Dutta I."/>
            <person name="Dunn M."/>
            <person name="Faulkner L."/>
            <person name="Frankish A."/>
            <person name="Frankland J.A."/>
            <person name="Garner P."/>
            <person name="Garnett J."/>
            <person name="Gribble S."/>
            <person name="Griffiths C."/>
            <person name="Grocock R."/>
            <person name="Gustafson E."/>
            <person name="Hammond S."/>
            <person name="Harley J.L."/>
            <person name="Hart E."/>
            <person name="Heath P.D."/>
            <person name="Ho T.P."/>
            <person name="Hopkins B."/>
            <person name="Horne J."/>
            <person name="Howden P.J."/>
            <person name="Huckle E."/>
            <person name="Hynds C."/>
            <person name="Johnson C."/>
            <person name="Johnson D."/>
            <person name="Kana A."/>
            <person name="Kay M."/>
            <person name="Kimberley A.M."/>
            <person name="Kershaw J.K."/>
            <person name="Kokkinaki M."/>
            <person name="Laird G.K."/>
            <person name="Lawlor S."/>
            <person name="Lee H.M."/>
            <person name="Leongamornlert D.A."/>
            <person name="Laird G."/>
            <person name="Lloyd C."/>
            <person name="Lloyd D.M."/>
            <person name="Loveland J."/>
            <person name="Lovell J."/>
            <person name="McLaren S."/>
            <person name="McLay K.E."/>
            <person name="McMurray A."/>
            <person name="Mashreghi-Mohammadi M."/>
            <person name="Matthews L."/>
            <person name="Milne S."/>
            <person name="Nickerson T."/>
            <person name="Nguyen M."/>
            <person name="Overton-Larty E."/>
            <person name="Palmer S.A."/>
            <person name="Pearce A.V."/>
            <person name="Peck A.I."/>
            <person name="Pelan S."/>
            <person name="Phillimore B."/>
            <person name="Porter K."/>
            <person name="Rice C.M."/>
            <person name="Rogosin A."/>
            <person name="Ross M.T."/>
            <person name="Sarafidou T."/>
            <person name="Sehra H.K."/>
            <person name="Shownkeen R."/>
            <person name="Skuce C.D."/>
            <person name="Smith M."/>
            <person name="Standring L."/>
            <person name="Sycamore N."/>
            <person name="Tester J."/>
            <person name="Thorpe A."/>
            <person name="Torcasso W."/>
            <person name="Tracey A."/>
            <person name="Tromans A."/>
            <person name="Tsolas J."/>
            <person name="Wall M."/>
            <person name="Walsh J."/>
            <person name="Wang H."/>
            <person name="Weinstock K."/>
            <person name="West A.P."/>
            <person name="Willey D.L."/>
            <person name="Whitehead S.L."/>
            <person name="Wilming L."/>
            <person name="Wray P.W."/>
            <person name="Young L."/>
            <person name="Chen Y."/>
            <person name="Lovering R.C."/>
            <person name="Moschonas N.K."/>
            <person name="Siebert R."/>
            <person name="Fechtel K."/>
            <person name="Bentley D."/>
            <person name="Durbin R.M."/>
            <person name="Hubbard T."/>
            <person name="Doucette-Stamm L."/>
            <person name="Beck S."/>
            <person name="Smith D.R."/>
            <person name="Rogers J."/>
        </authorList>
    </citation>
    <scope>NUCLEOTIDE SEQUENCE [LARGE SCALE GENOMIC DNA]</scope>
</reference>
<reference key="3">
    <citation type="journal article" date="2004" name="Genome Res.">
        <title>The status, quality, and expansion of the NIH full-length cDNA project: the Mammalian Gene Collection (MGC).</title>
        <authorList>
            <consortium name="The MGC Project Team"/>
        </authorList>
    </citation>
    <scope>NUCLEOTIDE SEQUENCE [LARGE SCALE MRNA] (ISOFORM 1)</scope>
    <scope>NUCLEOTIDE SEQUENCE [LARGE SCALE MRNA] OF 1-415 (ISOFORM 3)</scope>
    <scope>VARIANTS GLY-19 AND SER-40</scope>
    <source>
        <tissue>Skin</tissue>
    </source>
</reference>
<reference key="4">
    <citation type="journal article" date="2016" name="Expert Opin. Drug Metab. Toxicol.">
        <title>Xenobiotic/medium chain fatty acid: CoA ligase - a critical review on its role in fatty acid metabolism and the detoxification of benzoic acid and aspirin.</title>
        <authorList>
            <person name="van der Sluis R."/>
            <person name="Erasmus E."/>
        </authorList>
    </citation>
    <scope>REVIEW</scope>
</reference>
<gene>
    <name type="primary">ACSM6</name>
    <name type="synonym">C10orf129</name>
</gene>